<accession>A6T105</accession>
<feature type="chain" id="PRO_1000045135" description="Aspartate/glutamate leucyltransferase">
    <location>
        <begin position="1"/>
        <end position="249"/>
    </location>
</feature>
<evidence type="ECO:0000255" key="1">
    <source>
        <dbReference type="HAMAP-Rule" id="MF_00689"/>
    </source>
</evidence>
<name>BPT_JANMA</name>
<protein>
    <recommendedName>
        <fullName evidence="1">Aspartate/glutamate leucyltransferase</fullName>
        <ecNumber evidence="1">2.3.2.29</ecNumber>
    </recommendedName>
</protein>
<reference key="1">
    <citation type="journal article" date="2007" name="PLoS Genet.">
        <title>Genome analysis of Minibacterium massiliensis highlights the convergent evolution of water-living bacteria.</title>
        <authorList>
            <person name="Audic S."/>
            <person name="Robert C."/>
            <person name="Campagna B."/>
            <person name="Parinello H."/>
            <person name="Claverie J.-M."/>
            <person name="Raoult D."/>
            <person name="Drancourt M."/>
        </authorList>
    </citation>
    <scope>NUCLEOTIDE SEQUENCE [LARGE SCALE GENOMIC DNA]</scope>
    <source>
        <strain>Marseille</strain>
    </source>
</reference>
<organism>
    <name type="scientific">Janthinobacterium sp. (strain Marseille)</name>
    <name type="common">Minibacterium massiliensis</name>
    <dbReference type="NCBI Taxonomy" id="375286"/>
    <lineage>
        <taxon>Bacteria</taxon>
        <taxon>Pseudomonadati</taxon>
        <taxon>Pseudomonadota</taxon>
        <taxon>Betaproteobacteria</taxon>
        <taxon>Burkholderiales</taxon>
        <taxon>Oxalobacteraceae</taxon>
        <taxon>Janthinobacterium</taxon>
    </lineage>
</organism>
<proteinExistence type="inferred from homology"/>
<comment type="function">
    <text evidence="1">Functions in the N-end rule pathway of protein degradation where it conjugates Leu from its aminoacyl-tRNA to the N-termini of proteins containing an N-terminal aspartate or glutamate.</text>
</comment>
<comment type="catalytic activity">
    <reaction evidence="1">
        <text>N-terminal L-glutamyl-[protein] + L-leucyl-tRNA(Leu) = N-terminal L-leucyl-L-glutamyl-[protein] + tRNA(Leu) + H(+)</text>
        <dbReference type="Rhea" id="RHEA:50412"/>
        <dbReference type="Rhea" id="RHEA-COMP:9613"/>
        <dbReference type="Rhea" id="RHEA-COMP:9622"/>
        <dbReference type="Rhea" id="RHEA-COMP:12664"/>
        <dbReference type="Rhea" id="RHEA-COMP:12668"/>
        <dbReference type="ChEBI" id="CHEBI:15378"/>
        <dbReference type="ChEBI" id="CHEBI:64721"/>
        <dbReference type="ChEBI" id="CHEBI:78442"/>
        <dbReference type="ChEBI" id="CHEBI:78494"/>
        <dbReference type="ChEBI" id="CHEBI:133041"/>
        <dbReference type="EC" id="2.3.2.29"/>
    </reaction>
</comment>
<comment type="catalytic activity">
    <reaction evidence="1">
        <text>N-terminal L-aspartyl-[protein] + L-leucyl-tRNA(Leu) = N-terminal L-leucyl-L-aspartyl-[protein] + tRNA(Leu) + H(+)</text>
        <dbReference type="Rhea" id="RHEA:50420"/>
        <dbReference type="Rhea" id="RHEA-COMP:9613"/>
        <dbReference type="Rhea" id="RHEA-COMP:9622"/>
        <dbReference type="Rhea" id="RHEA-COMP:12669"/>
        <dbReference type="Rhea" id="RHEA-COMP:12674"/>
        <dbReference type="ChEBI" id="CHEBI:15378"/>
        <dbReference type="ChEBI" id="CHEBI:64720"/>
        <dbReference type="ChEBI" id="CHEBI:78442"/>
        <dbReference type="ChEBI" id="CHEBI:78494"/>
        <dbReference type="ChEBI" id="CHEBI:133042"/>
        <dbReference type="EC" id="2.3.2.29"/>
    </reaction>
</comment>
<comment type="subcellular location">
    <subcellularLocation>
        <location evidence="1">Cytoplasm</location>
    </subcellularLocation>
</comment>
<comment type="similarity">
    <text evidence="1">Belongs to the R-transferase family. Bpt subfamily.</text>
</comment>
<dbReference type="EC" id="2.3.2.29" evidence="1"/>
<dbReference type="EMBL" id="CP000269">
    <property type="protein sequence ID" value="ABR89277.1"/>
    <property type="molecule type" value="Genomic_DNA"/>
</dbReference>
<dbReference type="RefSeq" id="WP_012080365.1">
    <property type="nucleotide sequence ID" value="NC_009659.1"/>
</dbReference>
<dbReference type="SMR" id="A6T105"/>
<dbReference type="STRING" id="375286.mma_2512"/>
<dbReference type="KEGG" id="mms:mma_2512"/>
<dbReference type="eggNOG" id="COG2935">
    <property type="taxonomic scope" value="Bacteria"/>
</dbReference>
<dbReference type="HOGENOM" id="CLU_077607_0_0_4"/>
<dbReference type="OrthoDB" id="9782022at2"/>
<dbReference type="Proteomes" id="UP000006388">
    <property type="component" value="Chromosome"/>
</dbReference>
<dbReference type="GO" id="GO:0005737">
    <property type="term" value="C:cytoplasm"/>
    <property type="evidence" value="ECO:0007669"/>
    <property type="project" value="UniProtKB-SubCell"/>
</dbReference>
<dbReference type="GO" id="GO:0004057">
    <property type="term" value="F:arginyl-tRNA--protein transferase activity"/>
    <property type="evidence" value="ECO:0007669"/>
    <property type="project" value="InterPro"/>
</dbReference>
<dbReference type="GO" id="GO:0008914">
    <property type="term" value="F:leucyl-tRNA--protein transferase activity"/>
    <property type="evidence" value="ECO:0007669"/>
    <property type="project" value="UniProtKB-UniRule"/>
</dbReference>
<dbReference type="GO" id="GO:0071596">
    <property type="term" value="P:ubiquitin-dependent protein catabolic process via the N-end rule pathway"/>
    <property type="evidence" value="ECO:0007669"/>
    <property type="project" value="InterPro"/>
</dbReference>
<dbReference type="HAMAP" id="MF_00689">
    <property type="entry name" value="Bpt"/>
    <property type="match status" value="1"/>
</dbReference>
<dbReference type="InterPro" id="IPR016181">
    <property type="entry name" value="Acyl_CoA_acyltransferase"/>
</dbReference>
<dbReference type="InterPro" id="IPR017138">
    <property type="entry name" value="Asp_Glu_LeuTrfase"/>
</dbReference>
<dbReference type="InterPro" id="IPR030700">
    <property type="entry name" value="N-end_Aminoacyl_Trfase"/>
</dbReference>
<dbReference type="InterPro" id="IPR007472">
    <property type="entry name" value="N-end_Aminoacyl_Trfase_C"/>
</dbReference>
<dbReference type="InterPro" id="IPR007471">
    <property type="entry name" value="N-end_Aminoacyl_Trfase_N"/>
</dbReference>
<dbReference type="NCBIfam" id="NF002341">
    <property type="entry name" value="PRK01305.1-1"/>
    <property type="match status" value="1"/>
</dbReference>
<dbReference type="NCBIfam" id="NF002342">
    <property type="entry name" value="PRK01305.1-3"/>
    <property type="match status" value="1"/>
</dbReference>
<dbReference type="NCBIfam" id="NF002346">
    <property type="entry name" value="PRK01305.2-3"/>
    <property type="match status" value="1"/>
</dbReference>
<dbReference type="PANTHER" id="PTHR21367">
    <property type="entry name" value="ARGININE-TRNA-PROTEIN TRANSFERASE 1"/>
    <property type="match status" value="1"/>
</dbReference>
<dbReference type="PANTHER" id="PTHR21367:SF1">
    <property type="entry name" value="ARGINYL-TRNA--PROTEIN TRANSFERASE 1"/>
    <property type="match status" value="1"/>
</dbReference>
<dbReference type="Pfam" id="PF04377">
    <property type="entry name" value="ATE_C"/>
    <property type="match status" value="1"/>
</dbReference>
<dbReference type="Pfam" id="PF04376">
    <property type="entry name" value="ATE_N"/>
    <property type="match status" value="1"/>
</dbReference>
<dbReference type="PIRSF" id="PIRSF037208">
    <property type="entry name" value="ATE_pro_prd"/>
    <property type="match status" value="1"/>
</dbReference>
<dbReference type="SUPFAM" id="SSF55729">
    <property type="entry name" value="Acyl-CoA N-acyltransferases (Nat)"/>
    <property type="match status" value="1"/>
</dbReference>
<gene>
    <name evidence="1" type="primary">bpt</name>
    <name type="ordered locus">mma_2512</name>
</gene>
<keyword id="KW-0012">Acyltransferase</keyword>
<keyword id="KW-0963">Cytoplasm</keyword>
<keyword id="KW-0808">Transferase</keyword>
<sequence>MTHPKELPFSTLQFYATAPYPCSYLDGRQARSQVATPSHLINADVYSELVKSGFRRSGIFTYRPYCDGCQACTPVRIKVADFIPNRSQRRAQAKHSDLQTSVTKLTYLAEHYDLYLRYQTARHAGGGMDQDSREQYAQFLLQSKVNTRLVEFREDDGTLRMVSIIDVLDDGLSSVYTFYDPEPPNASYGTYNILWQIAQAKALQMPYIYLGYWIKESPKMSYKTNFQPLEALQQGEWTPLPVVDPAATR</sequence>